<proteinExistence type="inferred from homology"/>
<keyword id="KW-0028">Amino-acid biosynthesis</keyword>
<keyword id="KW-0413">Isomerase</keyword>
<keyword id="KW-0486">Methionine biosynthesis</keyword>
<keyword id="KW-1185">Reference proteome</keyword>
<accession>B5ED21</accession>
<evidence type="ECO:0000255" key="1">
    <source>
        <dbReference type="HAMAP-Rule" id="MF_01678"/>
    </source>
</evidence>
<evidence type="ECO:0000305" key="2"/>
<sequence>MSFRTIEWRDNKVIMIDQTRLPAEEVYNEYTDFQGVAQAIRGMVVRGAPAIGIAAAMGVALGAREIIADSFDTFYRQLENVCEVIGRTRPTAVNLFWGLERMKRVALQHKELNLNSIRELLKAEAISIETEDLAICKEIGRHGAALVKEGASILTHCNAGGLATAGYGTALGVIRGAHEAGKGIRVFADETRPWLQGARLTAWELMKDSIPVTLISDNMAGWLMKTGQIDFCVVGADRIAANGDTANKIGTYSVAVLAKENRIPFYVAAPISTLDLKLANGDLIPIEERASEEVTQIKGIQIAPEGVKVRNPAFDVTPARYITGIITEKGVVRGDYERELKALVGQ</sequence>
<comment type="function">
    <text evidence="1">Catalyzes the interconversion of methylthioribose-1-phosphate (MTR-1-P) into methylthioribulose-1-phosphate (MTRu-1-P).</text>
</comment>
<comment type="catalytic activity">
    <reaction evidence="1">
        <text>5-(methylsulfanyl)-alpha-D-ribose 1-phosphate = 5-(methylsulfanyl)-D-ribulose 1-phosphate</text>
        <dbReference type="Rhea" id="RHEA:19989"/>
        <dbReference type="ChEBI" id="CHEBI:58533"/>
        <dbReference type="ChEBI" id="CHEBI:58548"/>
        <dbReference type="EC" id="5.3.1.23"/>
    </reaction>
</comment>
<comment type="pathway">
    <text evidence="1">Amino-acid biosynthesis; L-methionine biosynthesis via salvage pathway; L-methionine from S-methyl-5-thio-alpha-D-ribose 1-phosphate: step 1/6.</text>
</comment>
<comment type="similarity">
    <text evidence="2">Belongs to the eIF-2B alpha/beta/delta subunits family. MtnA subfamily.</text>
</comment>
<feature type="chain" id="PRO_1000187359" description="Methylthioribose-1-phosphate isomerase">
    <location>
        <begin position="1"/>
        <end position="346"/>
    </location>
</feature>
<feature type="active site" description="Proton donor" evidence="1">
    <location>
        <position position="237"/>
    </location>
</feature>
<feature type="binding site" evidence="1">
    <location>
        <begin position="46"/>
        <end position="48"/>
    </location>
    <ligand>
        <name>substrate</name>
    </ligand>
</feature>
<feature type="binding site" evidence="1">
    <location>
        <position position="89"/>
    </location>
    <ligand>
        <name>substrate</name>
    </ligand>
</feature>
<feature type="binding site" evidence="1">
    <location>
        <position position="196"/>
    </location>
    <ligand>
        <name>substrate</name>
    </ligand>
</feature>
<feature type="binding site" evidence="1">
    <location>
        <begin position="247"/>
        <end position="248"/>
    </location>
    <ligand>
        <name>substrate</name>
    </ligand>
</feature>
<feature type="site" description="Transition state stabilizer" evidence="1">
    <location>
        <position position="157"/>
    </location>
</feature>
<gene>
    <name evidence="1" type="primary">mtnA</name>
    <name type="ordered locus">Gbem_3646</name>
</gene>
<dbReference type="EC" id="5.3.1.23" evidence="1"/>
<dbReference type="EMBL" id="CP001124">
    <property type="protein sequence ID" value="ACH40638.1"/>
    <property type="molecule type" value="Genomic_DNA"/>
</dbReference>
<dbReference type="RefSeq" id="WP_012532075.1">
    <property type="nucleotide sequence ID" value="NC_011146.1"/>
</dbReference>
<dbReference type="SMR" id="B5ED21"/>
<dbReference type="STRING" id="404380.Gbem_3646"/>
<dbReference type="KEGG" id="gbm:Gbem_3646"/>
<dbReference type="eggNOG" id="COG0182">
    <property type="taxonomic scope" value="Bacteria"/>
</dbReference>
<dbReference type="HOGENOM" id="CLU_016218_1_2_7"/>
<dbReference type="OrthoDB" id="9803436at2"/>
<dbReference type="UniPathway" id="UPA00904">
    <property type="reaction ID" value="UER00874"/>
</dbReference>
<dbReference type="Proteomes" id="UP000008825">
    <property type="component" value="Chromosome"/>
</dbReference>
<dbReference type="GO" id="GO:0046523">
    <property type="term" value="F:S-methyl-5-thioribose-1-phosphate isomerase activity"/>
    <property type="evidence" value="ECO:0007669"/>
    <property type="project" value="UniProtKB-UniRule"/>
</dbReference>
<dbReference type="GO" id="GO:0019509">
    <property type="term" value="P:L-methionine salvage from methylthioadenosine"/>
    <property type="evidence" value="ECO:0007669"/>
    <property type="project" value="UniProtKB-UniRule"/>
</dbReference>
<dbReference type="FunFam" id="1.20.120.420:FF:000001">
    <property type="entry name" value="Methylthioribose-1-phosphate isomerase"/>
    <property type="match status" value="1"/>
</dbReference>
<dbReference type="FunFam" id="3.40.50.10470:FF:000010">
    <property type="entry name" value="Methylthioribose-1-phosphate isomerase"/>
    <property type="match status" value="1"/>
</dbReference>
<dbReference type="Gene3D" id="1.20.120.420">
    <property type="entry name" value="translation initiation factor eif-2b, domain 1"/>
    <property type="match status" value="1"/>
</dbReference>
<dbReference type="Gene3D" id="3.40.50.10470">
    <property type="entry name" value="Translation initiation factor eif-2b, domain 2"/>
    <property type="match status" value="1"/>
</dbReference>
<dbReference type="HAMAP" id="MF_01678">
    <property type="entry name" value="Salvage_MtnA"/>
    <property type="match status" value="1"/>
</dbReference>
<dbReference type="InterPro" id="IPR000649">
    <property type="entry name" value="IF-2B-related"/>
</dbReference>
<dbReference type="InterPro" id="IPR005251">
    <property type="entry name" value="IF-M1Pi"/>
</dbReference>
<dbReference type="InterPro" id="IPR042529">
    <property type="entry name" value="IF_2B-like_C"/>
</dbReference>
<dbReference type="InterPro" id="IPR011559">
    <property type="entry name" value="Initiation_fac_2B_a/b/d"/>
</dbReference>
<dbReference type="InterPro" id="IPR027363">
    <property type="entry name" value="M1Pi_N"/>
</dbReference>
<dbReference type="InterPro" id="IPR037171">
    <property type="entry name" value="NagB/RpiA_transferase-like"/>
</dbReference>
<dbReference type="NCBIfam" id="TIGR00524">
    <property type="entry name" value="eIF-2B_rel"/>
    <property type="match status" value="1"/>
</dbReference>
<dbReference type="NCBIfam" id="NF004326">
    <property type="entry name" value="PRK05720.1"/>
    <property type="match status" value="1"/>
</dbReference>
<dbReference type="NCBIfam" id="TIGR00512">
    <property type="entry name" value="salvage_mtnA"/>
    <property type="match status" value="1"/>
</dbReference>
<dbReference type="PANTHER" id="PTHR43475">
    <property type="entry name" value="METHYLTHIORIBOSE-1-PHOSPHATE ISOMERASE"/>
    <property type="match status" value="1"/>
</dbReference>
<dbReference type="PANTHER" id="PTHR43475:SF1">
    <property type="entry name" value="METHYLTHIORIBOSE-1-PHOSPHATE ISOMERASE"/>
    <property type="match status" value="1"/>
</dbReference>
<dbReference type="Pfam" id="PF01008">
    <property type="entry name" value="IF-2B"/>
    <property type="match status" value="1"/>
</dbReference>
<dbReference type="SUPFAM" id="SSF100950">
    <property type="entry name" value="NagB/RpiA/CoA transferase-like"/>
    <property type="match status" value="1"/>
</dbReference>
<reference key="1">
    <citation type="submission" date="2008-07" db="EMBL/GenBank/DDBJ databases">
        <title>Complete sequence of Geobacter bemidjiensis BEM.</title>
        <authorList>
            <consortium name="US DOE Joint Genome Institute"/>
            <person name="Lucas S."/>
            <person name="Copeland A."/>
            <person name="Lapidus A."/>
            <person name="Glavina del Rio T."/>
            <person name="Dalin E."/>
            <person name="Tice H."/>
            <person name="Bruce D."/>
            <person name="Goodwin L."/>
            <person name="Pitluck S."/>
            <person name="Kiss H."/>
            <person name="Brettin T."/>
            <person name="Detter J.C."/>
            <person name="Han C."/>
            <person name="Kuske C.R."/>
            <person name="Schmutz J."/>
            <person name="Larimer F."/>
            <person name="Land M."/>
            <person name="Hauser L."/>
            <person name="Kyrpides N."/>
            <person name="Lykidis A."/>
            <person name="Lovley D."/>
            <person name="Richardson P."/>
        </authorList>
    </citation>
    <scope>NUCLEOTIDE SEQUENCE [LARGE SCALE GENOMIC DNA]</scope>
    <source>
        <strain>ATCC BAA-1014 / DSM 16622 / JCM 12645 / Bem</strain>
    </source>
</reference>
<protein>
    <recommendedName>
        <fullName evidence="1">Methylthioribose-1-phosphate isomerase</fullName>
        <shortName evidence="1">M1Pi</shortName>
        <shortName evidence="1">MTR-1-P isomerase</shortName>
        <ecNumber evidence="1">5.3.1.23</ecNumber>
    </recommendedName>
    <alternativeName>
        <fullName evidence="1">S-methyl-5-thioribose-1-phosphate isomerase</fullName>
    </alternativeName>
</protein>
<name>MTNA_CITBB</name>
<organism>
    <name type="scientific">Citrifermentans bemidjiense (strain ATCC BAA-1014 / DSM 16622 / JCM 12645 / Bem)</name>
    <name type="common">Geobacter bemidjiensis</name>
    <dbReference type="NCBI Taxonomy" id="404380"/>
    <lineage>
        <taxon>Bacteria</taxon>
        <taxon>Pseudomonadati</taxon>
        <taxon>Thermodesulfobacteriota</taxon>
        <taxon>Desulfuromonadia</taxon>
        <taxon>Geobacterales</taxon>
        <taxon>Geobacteraceae</taxon>
        <taxon>Citrifermentans</taxon>
    </lineage>
</organism>